<protein>
    <recommendedName>
        <fullName evidence="1">Aspartyl/glutamyl-tRNA(Asn/Gln) amidotransferase subunit C</fullName>
        <shortName evidence="1">Asp/Glu-ADT subunit C</shortName>
        <ecNumber evidence="1">6.3.5.-</ecNumber>
    </recommendedName>
</protein>
<reference key="1">
    <citation type="journal article" date="2004" name="PLoS Biol.">
        <title>Genomic insights into methanotrophy: the complete genome sequence of Methylococcus capsulatus (Bath).</title>
        <authorList>
            <person name="Ward N.L."/>
            <person name="Larsen O."/>
            <person name="Sakwa J."/>
            <person name="Bruseth L."/>
            <person name="Khouri H.M."/>
            <person name="Durkin A.S."/>
            <person name="Dimitrov G."/>
            <person name="Jiang L."/>
            <person name="Scanlan D."/>
            <person name="Kang K.H."/>
            <person name="Lewis M.R."/>
            <person name="Nelson K.E."/>
            <person name="Methe B.A."/>
            <person name="Wu M."/>
            <person name="Heidelberg J.F."/>
            <person name="Paulsen I.T."/>
            <person name="Fouts D.E."/>
            <person name="Ravel J."/>
            <person name="Tettelin H."/>
            <person name="Ren Q."/>
            <person name="Read T.D."/>
            <person name="DeBoy R.T."/>
            <person name="Seshadri R."/>
            <person name="Salzberg S.L."/>
            <person name="Jensen H.B."/>
            <person name="Birkeland N.K."/>
            <person name="Nelson W.C."/>
            <person name="Dodson R.J."/>
            <person name="Grindhaug S.H."/>
            <person name="Holt I.E."/>
            <person name="Eidhammer I."/>
            <person name="Jonasen I."/>
            <person name="Vanaken S."/>
            <person name="Utterback T.R."/>
            <person name="Feldblyum T.V."/>
            <person name="Fraser C.M."/>
            <person name="Lillehaug J.R."/>
            <person name="Eisen J.A."/>
        </authorList>
    </citation>
    <scope>NUCLEOTIDE SEQUENCE [LARGE SCALE GENOMIC DNA]</scope>
    <source>
        <strain>ATCC 33009 / NCIMB 11132 / Bath</strain>
    </source>
</reference>
<evidence type="ECO:0000255" key="1">
    <source>
        <dbReference type="HAMAP-Rule" id="MF_00122"/>
    </source>
</evidence>
<proteinExistence type="inferred from homology"/>
<name>GATC_METCA</name>
<comment type="function">
    <text evidence="1">Allows the formation of correctly charged Asn-tRNA(Asn) or Gln-tRNA(Gln) through the transamidation of misacylated Asp-tRNA(Asn) or Glu-tRNA(Gln) in organisms which lack either or both of asparaginyl-tRNA or glutaminyl-tRNA synthetases. The reaction takes place in the presence of glutamine and ATP through an activated phospho-Asp-tRNA(Asn) or phospho-Glu-tRNA(Gln).</text>
</comment>
<comment type="catalytic activity">
    <reaction evidence="1">
        <text>L-glutamyl-tRNA(Gln) + L-glutamine + ATP + H2O = L-glutaminyl-tRNA(Gln) + L-glutamate + ADP + phosphate + H(+)</text>
        <dbReference type="Rhea" id="RHEA:17521"/>
        <dbReference type="Rhea" id="RHEA-COMP:9681"/>
        <dbReference type="Rhea" id="RHEA-COMP:9684"/>
        <dbReference type="ChEBI" id="CHEBI:15377"/>
        <dbReference type="ChEBI" id="CHEBI:15378"/>
        <dbReference type="ChEBI" id="CHEBI:29985"/>
        <dbReference type="ChEBI" id="CHEBI:30616"/>
        <dbReference type="ChEBI" id="CHEBI:43474"/>
        <dbReference type="ChEBI" id="CHEBI:58359"/>
        <dbReference type="ChEBI" id="CHEBI:78520"/>
        <dbReference type="ChEBI" id="CHEBI:78521"/>
        <dbReference type="ChEBI" id="CHEBI:456216"/>
    </reaction>
</comment>
<comment type="catalytic activity">
    <reaction evidence="1">
        <text>L-aspartyl-tRNA(Asn) + L-glutamine + ATP + H2O = L-asparaginyl-tRNA(Asn) + L-glutamate + ADP + phosphate + 2 H(+)</text>
        <dbReference type="Rhea" id="RHEA:14513"/>
        <dbReference type="Rhea" id="RHEA-COMP:9674"/>
        <dbReference type="Rhea" id="RHEA-COMP:9677"/>
        <dbReference type="ChEBI" id="CHEBI:15377"/>
        <dbReference type="ChEBI" id="CHEBI:15378"/>
        <dbReference type="ChEBI" id="CHEBI:29985"/>
        <dbReference type="ChEBI" id="CHEBI:30616"/>
        <dbReference type="ChEBI" id="CHEBI:43474"/>
        <dbReference type="ChEBI" id="CHEBI:58359"/>
        <dbReference type="ChEBI" id="CHEBI:78515"/>
        <dbReference type="ChEBI" id="CHEBI:78516"/>
        <dbReference type="ChEBI" id="CHEBI:456216"/>
    </reaction>
</comment>
<comment type="subunit">
    <text evidence="1">Heterotrimer of A, B and C subunits.</text>
</comment>
<comment type="similarity">
    <text evidence="1">Belongs to the GatC family.</text>
</comment>
<gene>
    <name evidence="1" type="primary">gatC</name>
    <name type="ordered locus">MCA0099</name>
</gene>
<keyword id="KW-0067">ATP-binding</keyword>
<keyword id="KW-0436">Ligase</keyword>
<keyword id="KW-0547">Nucleotide-binding</keyword>
<keyword id="KW-0648">Protein biosynthesis</keyword>
<keyword id="KW-1185">Reference proteome</keyword>
<feature type="chain" id="PRO_1000016145" description="Aspartyl/glutamyl-tRNA(Asn/Gln) amidotransferase subunit C">
    <location>
        <begin position="1"/>
        <end position="95"/>
    </location>
</feature>
<sequence>MSLSAAEVNKIAWLARLAIDDDKVEAYARDLSQILGFVEQLGSVDTSRVAPMAHPLDEAQRLRPDDVTETDQRALFQAHAPLVEAGLYLVPKVIE</sequence>
<accession>Q60CK7</accession>
<organism>
    <name type="scientific">Methylococcus capsulatus (strain ATCC 33009 / NCIMB 11132 / Bath)</name>
    <dbReference type="NCBI Taxonomy" id="243233"/>
    <lineage>
        <taxon>Bacteria</taxon>
        <taxon>Pseudomonadati</taxon>
        <taxon>Pseudomonadota</taxon>
        <taxon>Gammaproteobacteria</taxon>
        <taxon>Methylococcales</taxon>
        <taxon>Methylococcaceae</taxon>
        <taxon>Methylococcus</taxon>
    </lineage>
</organism>
<dbReference type="EC" id="6.3.5.-" evidence="1"/>
<dbReference type="EMBL" id="AE017282">
    <property type="protein sequence ID" value="AAU90721.1"/>
    <property type="molecule type" value="Genomic_DNA"/>
</dbReference>
<dbReference type="RefSeq" id="WP_010959469.1">
    <property type="nucleotide sequence ID" value="NC_002977.6"/>
</dbReference>
<dbReference type="SMR" id="Q60CK7"/>
<dbReference type="STRING" id="243233.MCA0099"/>
<dbReference type="GeneID" id="88222449"/>
<dbReference type="KEGG" id="mca:MCA0099"/>
<dbReference type="eggNOG" id="COG0721">
    <property type="taxonomic scope" value="Bacteria"/>
</dbReference>
<dbReference type="HOGENOM" id="CLU_105899_2_2_6"/>
<dbReference type="Proteomes" id="UP000006821">
    <property type="component" value="Chromosome"/>
</dbReference>
<dbReference type="GO" id="GO:0050566">
    <property type="term" value="F:asparaginyl-tRNA synthase (glutamine-hydrolyzing) activity"/>
    <property type="evidence" value="ECO:0007669"/>
    <property type="project" value="RHEA"/>
</dbReference>
<dbReference type="GO" id="GO:0005524">
    <property type="term" value="F:ATP binding"/>
    <property type="evidence" value="ECO:0007669"/>
    <property type="project" value="UniProtKB-KW"/>
</dbReference>
<dbReference type="GO" id="GO:0050567">
    <property type="term" value="F:glutaminyl-tRNA synthase (glutamine-hydrolyzing) activity"/>
    <property type="evidence" value="ECO:0007669"/>
    <property type="project" value="UniProtKB-UniRule"/>
</dbReference>
<dbReference type="GO" id="GO:0070681">
    <property type="term" value="P:glutaminyl-tRNAGln biosynthesis via transamidation"/>
    <property type="evidence" value="ECO:0007669"/>
    <property type="project" value="TreeGrafter"/>
</dbReference>
<dbReference type="GO" id="GO:0006450">
    <property type="term" value="P:regulation of translational fidelity"/>
    <property type="evidence" value="ECO:0007669"/>
    <property type="project" value="InterPro"/>
</dbReference>
<dbReference type="GO" id="GO:0006412">
    <property type="term" value="P:translation"/>
    <property type="evidence" value="ECO:0007669"/>
    <property type="project" value="UniProtKB-UniRule"/>
</dbReference>
<dbReference type="Gene3D" id="1.10.20.60">
    <property type="entry name" value="Glu-tRNAGln amidotransferase C subunit, N-terminal domain"/>
    <property type="match status" value="1"/>
</dbReference>
<dbReference type="HAMAP" id="MF_00122">
    <property type="entry name" value="GatC"/>
    <property type="match status" value="1"/>
</dbReference>
<dbReference type="InterPro" id="IPR036113">
    <property type="entry name" value="Asp/Glu-ADT_sf_sub_c"/>
</dbReference>
<dbReference type="InterPro" id="IPR003837">
    <property type="entry name" value="GatC"/>
</dbReference>
<dbReference type="NCBIfam" id="TIGR00135">
    <property type="entry name" value="gatC"/>
    <property type="match status" value="1"/>
</dbReference>
<dbReference type="PANTHER" id="PTHR15004">
    <property type="entry name" value="GLUTAMYL-TRNA(GLN) AMIDOTRANSFERASE SUBUNIT C, MITOCHONDRIAL"/>
    <property type="match status" value="1"/>
</dbReference>
<dbReference type="PANTHER" id="PTHR15004:SF0">
    <property type="entry name" value="GLUTAMYL-TRNA(GLN) AMIDOTRANSFERASE SUBUNIT C, MITOCHONDRIAL"/>
    <property type="match status" value="1"/>
</dbReference>
<dbReference type="Pfam" id="PF02686">
    <property type="entry name" value="GatC"/>
    <property type="match status" value="1"/>
</dbReference>
<dbReference type="SUPFAM" id="SSF141000">
    <property type="entry name" value="Glu-tRNAGln amidotransferase C subunit"/>
    <property type="match status" value="1"/>
</dbReference>